<dbReference type="EC" id="3.2.1.14" evidence="9"/>
<dbReference type="EC" id="2.4.-.-" evidence="6"/>
<dbReference type="EMBL" id="AAHF01000006">
    <property type="protein sequence ID" value="EAL88702.1"/>
    <property type="molecule type" value="Genomic_DNA"/>
</dbReference>
<dbReference type="RefSeq" id="XP_750740.1">
    <property type="nucleotide sequence ID" value="XM_745647.1"/>
</dbReference>
<dbReference type="STRING" id="330879.Q4WMW2"/>
<dbReference type="EnsemblFungi" id="EAL88702">
    <property type="protein sequence ID" value="EAL88702"/>
    <property type="gene ID" value="AFUA_6G08510"/>
</dbReference>
<dbReference type="GeneID" id="3508027"/>
<dbReference type="KEGG" id="afm:AFUA_6G08510"/>
<dbReference type="eggNOG" id="ENOG502QQ71">
    <property type="taxonomic scope" value="Eukaryota"/>
</dbReference>
<dbReference type="HOGENOM" id="CLU_027506_2_0_1"/>
<dbReference type="InParanoid" id="Q4WMW2"/>
<dbReference type="OMA" id="WYIMFGR"/>
<dbReference type="OrthoDB" id="4781at2759"/>
<dbReference type="Proteomes" id="UP000002530">
    <property type="component" value="Chromosome 6"/>
</dbReference>
<dbReference type="GO" id="GO:0009277">
    <property type="term" value="C:fungal-type cell wall"/>
    <property type="evidence" value="ECO:0007669"/>
    <property type="project" value="EnsemblFungi"/>
</dbReference>
<dbReference type="GO" id="GO:0000131">
    <property type="term" value="C:incipient cellular bud site"/>
    <property type="evidence" value="ECO:0007669"/>
    <property type="project" value="EnsemblFungi"/>
</dbReference>
<dbReference type="GO" id="GO:0005886">
    <property type="term" value="C:plasma membrane"/>
    <property type="evidence" value="ECO:0007669"/>
    <property type="project" value="UniProtKB-SubCell"/>
</dbReference>
<dbReference type="GO" id="GO:0098552">
    <property type="term" value="C:side of membrane"/>
    <property type="evidence" value="ECO:0007669"/>
    <property type="project" value="UniProtKB-KW"/>
</dbReference>
<dbReference type="GO" id="GO:0016757">
    <property type="term" value="F:glycosyltransferase activity"/>
    <property type="evidence" value="ECO:0007669"/>
    <property type="project" value="EnsemblFungi"/>
</dbReference>
<dbReference type="GO" id="GO:0004553">
    <property type="term" value="F:hydrolase activity, hydrolyzing O-glycosyl compounds"/>
    <property type="evidence" value="ECO:0007669"/>
    <property type="project" value="UniProtKB-UniRule"/>
</dbReference>
<dbReference type="GO" id="GO:0005975">
    <property type="term" value="P:carbohydrate metabolic process"/>
    <property type="evidence" value="ECO:0007669"/>
    <property type="project" value="InterPro"/>
</dbReference>
<dbReference type="GO" id="GO:0006030">
    <property type="term" value="P:chitin metabolic process"/>
    <property type="evidence" value="ECO:0007669"/>
    <property type="project" value="EnsemblFungi"/>
</dbReference>
<dbReference type="GO" id="GO:0031505">
    <property type="term" value="P:fungal-type cell wall organization"/>
    <property type="evidence" value="ECO:0007669"/>
    <property type="project" value="EnsemblFungi"/>
</dbReference>
<dbReference type="CDD" id="cd02183">
    <property type="entry name" value="GH16_fungal_CRH1_transglycosylase"/>
    <property type="match status" value="1"/>
</dbReference>
<dbReference type="FunFam" id="2.60.120.200:FF:000152">
    <property type="entry name" value="Cell wall glucanase"/>
    <property type="match status" value="1"/>
</dbReference>
<dbReference type="Gene3D" id="2.60.120.200">
    <property type="match status" value="1"/>
</dbReference>
<dbReference type="InterPro" id="IPR013320">
    <property type="entry name" value="ConA-like_dom_sf"/>
</dbReference>
<dbReference type="InterPro" id="IPR000757">
    <property type="entry name" value="GH16"/>
</dbReference>
<dbReference type="InterPro" id="IPR017168">
    <property type="entry name" value="Glyco_hydro_16_CRH1_prd"/>
</dbReference>
<dbReference type="InterPro" id="IPR050546">
    <property type="entry name" value="Glycosyl_Hydrlase_16"/>
</dbReference>
<dbReference type="PANTHER" id="PTHR10963:SF68">
    <property type="entry name" value="GLYCOSIDASE CRH1-RELATED"/>
    <property type="match status" value="1"/>
</dbReference>
<dbReference type="PANTHER" id="PTHR10963">
    <property type="entry name" value="GLYCOSYL HYDROLASE-RELATED"/>
    <property type="match status" value="1"/>
</dbReference>
<dbReference type="Pfam" id="PF00722">
    <property type="entry name" value="Glyco_hydro_16"/>
    <property type="match status" value="1"/>
</dbReference>
<dbReference type="PIRSF" id="PIRSF037299">
    <property type="entry name" value="Glycosidase_CRH1_prd"/>
    <property type="match status" value="1"/>
</dbReference>
<dbReference type="SUPFAM" id="SSF49899">
    <property type="entry name" value="Concanavalin A-like lectins/glucanases"/>
    <property type="match status" value="1"/>
</dbReference>
<dbReference type="PROSITE" id="PS51762">
    <property type="entry name" value="GH16_2"/>
    <property type="match status" value="1"/>
</dbReference>
<keyword id="KW-1003">Cell membrane</keyword>
<keyword id="KW-0134">Cell wall</keyword>
<keyword id="KW-0961">Cell wall biogenesis/degradation</keyword>
<keyword id="KW-1015">Disulfide bond</keyword>
<keyword id="KW-0325">Glycoprotein</keyword>
<keyword id="KW-0326">Glycosidase</keyword>
<keyword id="KW-0328">Glycosyltransferase</keyword>
<keyword id="KW-0336">GPI-anchor</keyword>
<keyword id="KW-0378">Hydrolase</keyword>
<keyword id="KW-0449">Lipoprotein</keyword>
<keyword id="KW-0472">Membrane</keyword>
<keyword id="KW-1185">Reference proteome</keyword>
<keyword id="KW-0964">Secreted</keyword>
<keyword id="KW-0732">Signal</keyword>
<keyword id="KW-0808">Transferase</keyword>
<accession>Q4WMW2</accession>
<protein>
    <recommendedName>
        <fullName evidence="7">Crh-like protein 4</fullName>
    </recommendedName>
    <domain>
        <recommendedName>
            <fullName evidence="7">Chitinase crh4</fullName>
            <ecNumber evidence="9">3.2.1.14</ecNumber>
        </recommendedName>
    </domain>
    <domain>
        <recommendedName>
            <fullName evidence="7">Chitin transglycosylase crh4</fullName>
            <ecNumber evidence="6">2.4.-.-</ecNumber>
        </recommendedName>
    </domain>
</protein>
<name>CRH4_ASPFU</name>
<comment type="function">
    <text evidence="6">Dual chitinase/transglycosylase that plays a role in cell wall architecture (PubMed:30971696). Chitinase and transglycosylase activities are coupled (PubMed:30971696). Required for the polysaccharide cross-linking at the septa and the cell wall (PubMed:30971696). More specifically, transfers chitin to 1,6-beta-glucan in the cell wall (PubMed:30971696).</text>
</comment>
<comment type="catalytic activity">
    <reaction evidence="9">
        <text>Random endo-hydrolysis of N-acetyl-beta-D-glucosaminide (1-&gt;4)-beta-linkages in chitin and chitodextrins.</text>
        <dbReference type="EC" id="3.2.1.14"/>
    </reaction>
</comment>
<comment type="subcellular location">
    <subcellularLocation>
        <location evidence="3">Cell membrane</location>
        <topology evidence="3">Lipid-anchor</topology>
        <topology evidence="3">GPI-anchor</topology>
    </subcellularLocation>
    <subcellularLocation>
        <location evidence="8">Secreted</location>
        <location evidence="8">Cell wall</location>
    </subcellularLocation>
</comment>
<comment type="PTM">
    <text evidence="8">The GPI-like anchor contains a phosphoceramide lipid group. The anchor position has not been determined.</text>
</comment>
<comment type="disruption phenotype">
    <text evidence="6">Does not affect growth rate, germination or sporulation and displays only minor sensitivity to high concentrations of Congo Red, even when all crh family members are deleted.</text>
</comment>
<comment type="similarity">
    <text evidence="8">Belongs to the glycosyl hydrolase 16 family. CRH1 subfamily.</text>
</comment>
<organism>
    <name type="scientific">Aspergillus fumigatus (strain ATCC MYA-4609 / CBS 101355 / FGSC A1100 / Af293)</name>
    <name type="common">Neosartorya fumigata</name>
    <dbReference type="NCBI Taxonomy" id="330879"/>
    <lineage>
        <taxon>Eukaryota</taxon>
        <taxon>Fungi</taxon>
        <taxon>Dikarya</taxon>
        <taxon>Ascomycota</taxon>
        <taxon>Pezizomycotina</taxon>
        <taxon>Eurotiomycetes</taxon>
        <taxon>Eurotiomycetidae</taxon>
        <taxon>Eurotiales</taxon>
        <taxon>Aspergillaceae</taxon>
        <taxon>Aspergillus</taxon>
        <taxon>Aspergillus subgen. Fumigati</taxon>
    </lineage>
</organism>
<proteinExistence type="inferred from homology"/>
<gene>
    <name evidence="7" type="primary">crh4</name>
    <name type="ORF">AFUA_6G08510</name>
</gene>
<evidence type="ECO:0000250" key="1">
    <source>
        <dbReference type="UniProtKB" id="P27051"/>
    </source>
</evidence>
<evidence type="ECO:0000250" key="2">
    <source>
        <dbReference type="UniProtKB" id="Q8J0P4"/>
    </source>
</evidence>
<evidence type="ECO:0000255" key="3"/>
<evidence type="ECO:0000255" key="4">
    <source>
        <dbReference type="PROSITE-ProRule" id="PRU00498"/>
    </source>
</evidence>
<evidence type="ECO:0000255" key="5">
    <source>
        <dbReference type="PROSITE-ProRule" id="PRU01098"/>
    </source>
</evidence>
<evidence type="ECO:0000269" key="6">
    <source>
    </source>
</evidence>
<evidence type="ECO:0000303" key="7">
    <source>
    </source>
</evidence>
<evidence type="ECO:0000305" key="8"/>
<evidence type="ECO:0000305" key="9">
    <source>
    </source>
</evidence>
<feature type="signal peptide" evidence="3">
    <location>
        <begin position="1"/>
        <end position="21"/>
    </location>
</feature>
<feature type="chain" id="PRO_5004246349" description="Crh-like protein 4" evidence="3">
    <location>
        <begin position="22"/>
        <end position="450"/>
    </location>
</feature>
<feature type="domain" description="GH16" evidence="5">
    <location>
        <begin position="46"/>
        <end position="228"/>
    </location>
</feature>
<feature type="active site" description="Nucleophile" evidence="1">
    <location>
        <position position="119"/>
    </location>
</feature>
<feature type="active site" description="Proton donor" evidence="1">
    <location>
        <position position="123"/>
    </location>
</feature>
<feature type="binding site" evidence="2">
    <location>
        <position position="123"/>
    </location>
    <ligand>
        <name>chitin</name>
        <dbReference type="ChEBI" id="CHEBI:17029"/>
    </ligand>
</feature>
<feature type="binding site" evidence="2">
    <location>
        <position position="201"/>
    </location>
    <ligand>
        <name>chitin</name>
        <dbReference type="ChEBI" id="CHEBI:17029"/>
    </ligand>
</feature>
<feature type="binding site" evidence="2">
    <location>
        <position position="205"/>
    </location>
    <ligand>
        <name>chitin</name>
        <dbReference type="ChEBI" id="CHEBI:17029"/>
    </ligand>
</feature>
<feature type="binding site" evidence="2">
    <location>
        <position position="216"/>
    </location>
    <ligand>
        <name>chitin</name>
        <dbReference type="ChEBI" id="CHEBI:17029"/>
    </ligand>
</feature>
<feature type="glycosylation site" description="N-linked (GlcNAc...) asparagine" evidence="4">
    <location>
        <position position="383"/>
    </location>
</feature>
<feature type="disulfide bond" evidence="2">
    <location>
        <begin position="27"/>
        <end position="34"/>
    </location>
</feature>
<sequence length="450" mass="47105">MRLSLVGVAIGLLSSSAIVTAQTYTDCNPLQKTCPPDPALGRSVTYDFTKGSSPDFKPVGSPTYDSNNGAAFSVAKQGDAPLIQSNWYMMFGHVEFVIKTAPGKGIVSSAVLQSDDLDEIDWEWLGANNLYVQTNYFGKGDTGSYNRGAAHDNAGNQDGFHTYTIDWTSTQIVWQIDGKTVRVLTAESAGDHFPQSPMMVKVGVWAGGDPNNAPGTIQWAGGETDYSAGPYTMYLKSLVATDYSTGKSYTYSDKSGSWRSITSDGGQINGNSDAESISTVESAPPVTATIDSAPIPFSGTHRETSSFVTPSIWPWVPKPTTLSSSVAKDTTLPSGWTFSGSRQVQPPSAASSTPPCTSSSLVSSLASPSHSGLKTSSISSVPNSSSATKSTGHLASTATYQISTYDSTLPSFSASIAHVAPTVAAANDLLEAPLGMGVFCALLGGLIAIF</sequence>
<reference key="1">
    <citation type="journal article" date="2005" name="Nature">
        <title>Genomic sequence of the pathogenic and allergenic filamentous fungus Aspergillus fumigatus.</title>
        <authorList>
            <person name="Nierman W.C."/>
            <person name="Pain A."/>
            <person name="Anderson M.J."/>
            <person name="Wortman J.R."/>
            <person name="Kim H.S."/>
            <person name="Arroyo J."/>
            <person name="Berriman M."/>
            <person name="Abe K."/>
            <person name="Archer D.B."/>
            <person name="Bermejo C."/>
            <person name="Bennett J.W."/>
            <person name="Bowyer P."/>
            <person name="Chen D."/>
            <person name="Collins M."/>
            <person name="Coulsen R."/>
            <person name="Davies R."/>
            <person name="Dyer P.S."/>
            <person name="Farman M.L."/>
            <person name="Fedorova N."/>
            <person name="Fedorova N.D."/>
            <person name="Feldblyum T.V."/>
            <person name="Fischer R."/>
            <person name="Fosker N."/>
            <person name="Fraser A."/>
            <person name="Garcia J.L."/>
            <person name="Garcia M.J."/>
            <person name="Goble A."/>
            <person name="Goldman G.H."/>
            <person name="Gomi K."/>
            <person name="Griffith-Jones S."/>
            <person name="Gwilliam R."/>
            <person name="Haas B.J."/>
            <person name="Haas H."/>
            <person name="Harris D.E."/>
            <person name="Horiuchi H."/>
            <person name="Huang J."/>
            <person name="Humphray S."/>
            <person name="Jimenez J."/>
            <person name="Keller N."/>
            <person name="Khouri H."/>
            <person name="Kitamoto K."/>
            <person name="Kobayashi T."/>
            <person name="Konzack S."/>
            <person name="Kulkarni R."/>
            <person name="Kumagai T."/>
            <person name="Lafton A."/>
            <person name="Latge J.-P."/>
            <person name="Li W."/>
            <person name="Lord A."/>
            <person name="Lu C."/>
            <person name="Majoros W.H."/>
            <person name="May G.S."/>
            <person name="Miller B.L."/>
            <person name="Mohamoud Y."/>
            <person name="Molina M."/>
            <person name="Monod M."/>
            <person name="Mouyna I."/>
            <person name="Mulligan S."/>
            <person name="Murphy L.D."/>
            <person name="O'Neil S."/>
            <person name="Paulsen I."/>
            <person name="Penalva M.A."/>
            <person name="Pertea M."/>
            <person name="Price C."/>
            <person name="Pritchard B.L."/>
            <person name="Quail M.A."/>
            <person name="Rabbinowitsch E."/>
            <person name="Rawlins N."/>
            <person name="Rajandream M.A."/>
            <person name="Reichard U."/>
            <person name="Renauld H."/>
            <person name="Robson G.D."/>
            <person name="Rodriguez de Cordoba S."/>
            <person name="Rodriguez-Pena J.M."/>
            <person name="Ronning C.M."/>
            <person name="Rutter S."/>
            <person name="Salzberg S.L."/>
            <person name="Sanchez M."/>
            <person name="Sanchez-Ferrero J.C."/>
            <person name="Saunders D."/>
            <person name="Seeger K."/>
            <person name="Squares R."/>
            <person name="Squares S."/>
            <person name="Takeuchi M."/>
            <person name="Tekaia F."/>
            <person name="Turner G."/>
            <person name="Vazquez de Aldana C.R."/>
            <person name="Weidman J."/>
            <person name="White O."/>
            <person name="Woodward J.R."/>
            <person name="Yu J.-H."/>
            <person name="Fraser C.M."/>
            <person name="Galagan J.E."/>
            <person name="Asai K."/>
            <person name="Machida M."/>
            <person name="Hall N."/>
            <person name="Barrell B.G."/>
            <person name="Denning D.W."/>
        </authorList>
    </citation>
    <scope>NUCLEOTIDE SEQUENCE [LARGE SCALE GENOMIC DNA]</scope>
    <source>
        <strain>ATCC MYA-4609 / CBS 101355 / FGSC A1100 / Af293</strain>
    </source>
</reference>
<reference key="2">
    <citation type="journal article" date="2019" name="Nat. Commun.">
        <title>Mechanisms of redundancy and specificity of the Aspergillus fumigatus Crh transglycosylases.</title>
        <authorList>
            <person name="Fang W."/>
            <person name="Sanz A.B."/>
            <person name="Bartual S.G."/>
            <person name="Wang B."/>
            <person name="Ferenbach A.T."/>
            <person name="Farkas V."/>
            <person name="Hurtado-Guerrero R."/>
            <person name="Arroyo J."/>
            <person name="van Aalten D.M.F."/>
        </authorList>
    </citation>
    <scope>FUNCTION</scope>
    <scope>DISRUPTION PHENOTYPE</scope>
</reference>